<comment type="function">
    <text evidence="3">Methylates (mono- and asymmetric dimethylation) the guanidino nitrogens of arginyl residues in proteins. May methylate histone H3 at 'Arg-17' and activate transcription via chromatin remodeling.</text>
</comment>
<comment type="catalytic activity">
    <reaction evidence="3">
        <text>L-arginyl-[protein] + 2 S-adenosyl-L-methionine = N(omega),N(omega)-dimethyl-L-arginyl-[protein] + 2 S-adenosyl-L-homocysteine + 2 H(+)</text>
        <dbReference type="Rhea" id="RHEA:48096"/>
        <dbReference type="Rhea" id="RHEA-COMP:10532"/>
        <dbReference type="Rhea" id="RHEA-COMP:11991"/>
        <dbReference type="ChEBI" id="CHEBI:15378"/>
        <dbReference type="ChEBI" id="CHEBI:29965"/>
        <dbReference type="ChEBI" id="CHEBI:57856"/>
        <dbReference type="ChEBI" id="CHEBI:59789"/>
        <dbReference type="ChEBI" id="CHEBI:61897"/>
        <dbReference type="EC" id="2.1.1.319"/>
    </reaction>
</comment>
<comment type="subunit">
    <text evidence="1">Homodimer.</text>
</comment>
<comment type="subcellular location">
    <subcellularLocation>
        <location evidence="4">Cytoplasm</location>
    </subcellularLocation>
    <subcellularLocation>
        <location evidence="4">Nucleus</location>
    </subcellularLocation>
</comment>
<comment type="PTM">
    <text evidence="1">The dimethylated protein is the major form.</text>
</comment>
<comment type="similarity">
    <text evidence="5">Belongs to the class I-like SAM-binding methyltransferase superfamily. Protein arginine N-methyltransferase family.</text>
</comment>
<feature type="chain" id="PRO_0000382221" description="Histone-arginine methyltransferase CARMER">
    <location>
        <begin position="1"/>
        <end position="531"/>
    </location>
</feature>
<feature type="domain" description="SAM-dependent MTase PRMT-type" evidence="5">
    <location>
        <begin position="141"/>
        <end position="450"/>
    </location>
</feature>
<feature type="binding site" evidence="2">
    <location>
        <position position="154"/>
    </location>
    <ligand>
        <name>S-adenosyl-L-methionine</name>
        <dbReference type="ChEBI" id="CHEBI:59789"/>
    </ligand>
</feature>
<feature type="binding site" evidence="2">
    <location>
        <position position="163"/>
    </location>
    <ligand>
        <name>S-adenosyl-L-methionine</name>
        <dbReference type="ChEBI" id="CHEBI:59789"/>
    </ligand>
</feature>
<feature type="binding site" evidence="2">
    <location>
        <position position="187"/>
    </location>
    <ligand>
        <name>S-adenosyl-L-methionine</name>
        <dbReference type="ChEBI" id="CHEBI:59789"/>
    </ligand>
</feature>
<feature type="binding site" evidence="2">
    <location>
        <position position="209"/>
    </location>
    <ligand>
        <name>S-adenosyl-L-methionine</name>
        <dbReference type="ChEBI" id="CHEBI:59789"/>
    </ligand>
</feature>
<feature type="binding site" evidence="2">
    <location>
        <position position="238"/>
    </location>
    <ligand>
        <name>S-adenosyl-L-methionine</name>
        <dbReference type="ChEBI" id="CHEBI:59789"/>
    </ligand>
</feature>
<feature type="binding site" evidence="1">
    <location>
        <position position="266"/>
    </location>
    <ligand>
        <name>S-adenosyl-L-methionine</name>
        <dbReference type="ChEBI" id="CHEBI:59789"/>
    </ligand>
</feature>
<feature type="modified residue" description="Asymmetric dimethylarginine; by autocatalysis" evidence="3">
    <location>
        <position position="501"/>
    </location>
</feature>
<name>CARM1_DROAN</name>
<sequence length="531" mass="59974">MSSLRLEENRKLATAAAVCPLSNCQFSGVVISAIADEQKLEFANKYRGSCTLLCSYDSQGVVLRIVADDDRSHVLKEYMISADTDAAQMGRRSYAVSLESDNLVLRFASEQDQQLFRKVVENVKHLRPKSVFSQRTEESSASQYFQFYGYLSQQQNMMQDYVRTSTYQRAILGNSIDFQDKIVLDVGAGSGILSFFAVQAGAAKVYAIEASNMAQYAQQLVESNNVQHKISVIPGKIEEIELPEKVDVIISEPMGYMLYNERMLETYLHARKWLKPQGKMFPTHGDLHIAPFSDESLYSEQYNKANFWYQSAFHGVDLTTLHKEGMKEYFRQPIVDTFDIRICMAKSVRHVCDFLNDKEDDLHVIDIPLEFHILQTGICHGLAFWFDVEFSGTTQNVWLSTSPTAPLTHWYQVRCLLPMPIFIKQGQTLTGRVLLEANRRQSYDVTIDLHIEGTLISSSNTLDLKNPYFRYTGAPVQAPPGTSTQSPSEQYWTQVDSQGSRNSSSMLNGTISVNGMGDGSMDITHGLMHPH</sequence>
<accession>B3M1E1</accession>
<proteinExistence type="inferred from homology"/>
<gene>
    <name type="primary">Art4</name>
    <name type="ORF">GF17144</name>
</gene>
<reference evidence="6" key="1">
    <citation type="journal article" date="2007" name="Nature">
        <title>Evolution of genes and genomes on the Drosophila phylogeny.</title>
        <authorList>
            <consortium name="Drosophila 12 genomes consortium"/>
        </authorList>
    </citation>
    <scope>NUCLEOTIDE SEQUENCE [LARGE SCALE GENOMIC DNA]</scope>
    <source>
        <strain evidence="6">Tucson 14024-0371.13</strain>
    </source>
</reference>
<organism>
    <name type="scientific">Drosophila ananassae</name>
    <name type="common">Fruit fly</name>
    <dbReference type="NCBI Taxonomy" id="7217"/>
    <lineage>
        <taxon>Eukaryota</taxon>
        <taxon>Metazoa</taxon>
        <taxon>Ecdysozoa</taxon>
        <taxon>Arthropoda</taxon>
        <taxon>Hexapoda</taxon>
        <taxon>Insecta</taxon>
        <taxon>Pterygota</taxon>
        <taxon>Neoptera</taxon>
        <taxon>Endopterygota</taxon>
        <taxon>Diptera</taxon>
        <taxon>Brachycera</taxon>
        <taxon>Muscomorpha</taxon>
        <taxon>Ephydroidea</taxon>
        <taxon>Drosophilidae</taxon>
        <taxon>Drosophila</taxon>
        <taxon>Sophophora</taxon>
    </lineage>
</organism>
<protein>
    <recommendedName>
        <fullName evidence="3">Histone-arginine methyltransferase CARMER</fullName>
        <ecNumber evidence="3">2.1.1.319</ecNumber>
    </recommendedName>
</protein>
<evidence type="ECO:0000250" key="1"/>
<evidence type="ECO:0000250" key="2">
    <source>
        <dbReference type="UniProtKB" id="Q63009"/>
    </source>
</evidence>
<evidence type="ECO:0000250" key="3">
    <source>
        <dbReference type="UniProtKB" id="Q7Q2B7"/>
    </source>
</evidence>
<evidence type="ECO:0000250" key="4">
    <source>
        <dbReference type="UniProtKB" id="Q9VH48"/>
    </source>
</evidence>
<evidence type="ECO:0000255" key="5">
    <source>
        <dbReference type="PROSITE-ProRule" id="PRU01015"/>
    </source>
</evidence>
<evidence type="ECO:0000312" key="6">
    <source>
        <dbReference type="EMBL" id="EDV42168.1"/>
    </source>
</evidence>
<keyword id="KW-0156">Chromatin regulator</keyword>
<keyword id="KW-0963">Cytoplasm</keyword>
<keyword id="KW-0488">Methylation</keyword>
<keyword id="KW-0489">Methyltransferase</keyword>
<keyword id="KW-0539">Nucleus</keyword>
<keyword id="KW-1185">Reference proteome</keyword>
<keyword id="KW-0949">S-adenosyl-L-methionine</keyword>
<keyword id="KW-0804">Transcription</keyword>
<keyword id="KW-0805">Transcription regulation</keyword>
<keyword id="KW-0808">Transferase</keyword>
<dbReference type="EC" id="2.1.1.319" evidence="3"/>
<dbReference type="EMBL" id="CH902617">
    <property type="protein sequence ID" value="EDV42168.1"/>
    <property type="molecule type" value="Genomic_DNA"/>
</dbReference>
<dbReference type="SMR" id="B3M1E1"/>
<dbReference type="FunCoup" id="B3M1E1">
    <property type="interactions" value="2368"/>
</dbReference>
<dbReference type="STRING" id="7217.B3M1E1"/>
<dbReference type="EnsemblMetazoa" id="FBtr0121844">
    <property type="protein sequence ID" value="FBpp0120336"/>
    <property type="gene ID" value="FBgn0094163"/>
</dbReference>
<dbReference type="EnsemblMetazoa" id="XM_001953571.4">
    <property type="protein sequence ID" value="XP_001953607.1"/>
    <property type="gene ID" value="LOC6499932"/>
</dbReference>
<dbReference type="GeneID" id="6499932"/>
<dbReference type="KEGG" id="dan:6499932"/>
<dbReference type="CTD" id="420"/>
<dbReference type="eggNOG" id="KOG1500">
    <property type="taxonomic scope" value="Eukaryota"/>
</dbReference>
<dbReference type="HOGENOM" id="CLU_017375_0_1_1"/>
<dbReference type="InParanoid" id="B3M1E1"/>
<dbReference type="OMA" id="GIGDGMD"/>
<dbReference type="OrthoDB" id="7848332at2759"/>
<dbReference type="PhylomeDB" id="B3M1E1"/>
<dbReference type="Proteomes" id="UP000007801">
    <property type="component" value="Unassembled WGS sequence"/>
</dbReference>
<dbReference type="GO" id="GO:0005737">
    <property type="term" value="C:cytoplasm"/>
    <property type="evidence" value="ECO:0000250"/>
    <property type="project" value="UniProtKB"/>
</dbReference>
<dbReference type="GO" id="GO:0005829">
    <property type="term" value="C:cytosol"/>
    <property type="evidence" value="ECO:0007669"/>
    <property type="project" value="EnsemblMetazoa"/>
</dbReference>
<dbReference type="GO" id="GO:0035097">
    <property type="term" value="C:histone methyltransferase complex"/>
    <property type="evidence" value="ECO:0007669"/>
    <property type="project" value="EnsemblMetazoa"/>
</dbReference>
<dbReference type="GO" id="GO:0005634">
    <property type="term" value="C:nucleus"/>
    <property type="evidence" value="ECO:0000250"/>
    <property type="project" value="UniProtKB"/>
</dbReference>
<dbReference type="GO" id="GO:0035642">
    <property type="term" value="F:histone H3R17 methyltransferase activity"/>
    <property type="evidence" value="ECO:0000250"/>
    <property type="project" value="UniProtKB"/>
</dbReference>
<dbReference type="GO" id="GO:0070611">
    <property type="term" value="F:histone H3R2 methyltransferase activity"/>
    <property type="evidence" value="ECO:0000250"/>
    <property type="project" value="UniProtKB"/>
</dbReference>
<dbReference type="GO" id="GO:0140903">
    <property type="term" value="F:histone H3R26 methyltransferase activity"/>
    <property type="evidence" value="ECO:0000250"/>
    <property type="project" value="UniProtKB"/>
</dbReference>
<dbReference type="GO" id="GO:0035242">
    <property type="term" value="F:protein-arginine omega-N asymmetric methyltransferase activity"/>
    <property type="evidence" value="ECO:0000250"/>
    <property type="project" value="UniProtKB"/>
</dbReference>
<dbReference type="GO" id="GO:0035241">
    <property type="term" value="F:protein-arginine omega-N monomethyltransferase activity"/>
    <property type="evidence" value="ECO:0000250"/>
    <property type="project" value="UniProtKB"/>
</dbReference>
<dbReference type="GO" id="GO:0006338">
    <property type="term" value="P:chromatin remodeling"/>
    <property type="evidence" value="ECO:0000250"/>
    <property type="project" value="UniProtKB"/>
</dbReference>
<dbReference type="GO" id="GO:0019919">
    <property type="term" value="P:peptidyl-arginine methylation, to asymmetrical-dimethyl arginine"/>
    <property type="evidence" value="ECO:0000250"/>
    <property type="project" value="UniProtKB"/>
</dbReference>
<dbReference type="GO" id="GO:0120142">
    <property type="term" value="P:positive regulation of ecdysone receptor signaling pathway"/>
    <property type="evidence" value="ECO:0007669"/>
    <property type="project" value="EnsemblMetazoa"/>
</dbReference>
<dbReference type="GO" id="GO:0045944">
    <property type="term" value="P:positive regulation of transcription by RNA polymerase II"/>
    <property type="evidence" value="ECO:0007669"/>
    <property type="project" value="EnsemblMetazoa"/>
</dbReference>
<dbReference type="GO" id="GO:0006355">
    <property type="term" value="P:regulation of DNA-templated transcription"/>
    <property type="evidence" value="ECO:0000250"/>
    <property type="project" value="UniProtKB"/>
</dbReference>
<dbReference type="CDD" id="cd02440">
    <property type="entry name" value="AdoMet_MTases"/>
    <property type="match status" value="1"/>
</dbReference>
<dbReference type="FunFam" id="2.30.29.30:FF:000449">
    <property type="entry name" value="Histone-arginine methyltransferase CARMER"/>
    <property type="match status" value="1"/>
</dbReference>
<dbReference type="FunFam" id="2.70.160.11:FF:000002">
    <property type="entry name" value="Probable histone-arginine methyltransferase CARM1"/>
    <property type="match status" value="1"/>
</dbReference>
<dbReference type="FunFam" id="3.40.50.150:FF:000031">
    <property type="entry name" value="Putative Histone-arginine methyltransferase CARM1"/>
    <property type="match status" value="1"/>
</dbReference>
<dbReference type="Gene3D" id="2.70.160.11">
    <property type="entry name" value="Hnrnp arginine n-methyltransferase1"/>
    <property type="match status" value="1"/>
</dbReference>
<dbReference type="Gene3D" id="2.30.29.30">
    <property type="entry name" value="Pleckstrin-homology domain (PH domain)/Phosphotyrosine-binding domain (PTB)"/>
    <property type="match status" value="1"/>
</dbReference>
<dbReference type="Gene3D" id="3.40.50.150">
    <property type="entry name" value="Vaccinia Virus protein VP39"/>
    <property type="match status" value="1"/>
</dbReference>
<dbReference type="InterPro" id="IPR025799">
    <property type="entry name" value="Arg_MeTrfase"/>
</dbReference>
<dbReference type="InterPro" id="IPR011993">
    <property type="entry name" value="PH-like_dom_sf"/>
</dbReference>
<dbReference type="InterPro" id="IPR055135">
    <property type="entry name" value="PRMT_dom"/>
</dbReference>
<dbReference type="InterPro" id="IPR029063">
    <property type="entry name" value="SAM-dependent_MTases_sf"/>
</dbReference>
<dbReference type="PANTHER" id="PTHR11006:SF10">
    <property type="entry name" value="HISTONE-ARGININE METHYLTRANSFERASE CARMER-RELATED"/>
    <property type="match status" value="1"/>
</dbReference>
<dbReference type="PANTHER" id="PTHR11006">
    <property type="entry name" value="PROTEIN ARGININE N-METHYLTRANSFERASE"/>
    <property type="match status" value="1"/>
</dbReference>
<dbReference type="Pfam" id="PF06325">
    <property type="entry name" value="PrmA"/>
    <property type="match status" value="1"/>
</dbReference>
<dbReference type="Pfam" id="PF22528">
    <property type="entry name" value="PRMT_C"/>
    <property type="match status" value="1"/>
</dbReference>
<dbReference type="SUPFAM" id="SSF53335">
    <property type="entry name" value="S-adenosyl-L-methionine-dependent methyltransferases"/>
    <property type="match status" value="1"/>
</dbReference>
<dbReference type="PROSITE" id="PS51678">
    <property type="entry name" value="SAM_MT_PRMT"/>
    <property type="match status" value="1"/>
</dbReference>